<protein>
    <recommendedName>
        <fullName>Guanylate kinase</fullName>
        <ecNumber>2.7.4.8</ecNumber>
    </recommendedName>
    <alternativeName>
        <fullName>GMP kinase</fullName>
    </alternativeName>
</protein>
<name>KGUA_MYCTO</name>
<organism>
    <name type="scientific">Mycobacterium tuberculosis (strain CDC 1551 / Oshkosh)</name>
    <dbReference type="NCBI Taxonomy" id="83331"/>
    <lineage>
        <taxon>Bacteria</taxon>
        <taxon>Bacillati</taxon>
        <taxon>Actinomycetota</taxon>
        <taxon>Actinomycetes</taxon>
        <taxon>Mycobacteriales</taxon>
        <taxon>Mycobacteriaceae</taxon>
        <taxon>Mycobacterium</taxon>
        <taxon>Mycobacterium tuberculosis complex</taxon>
    </lineage>
</organism>
<evidence type="ECO:0000250" key="1"/>
<evidence type="ECO:0000305" key="2"/>
<gene>
    <name type="primary">gmk</name>
    <name type="ordered locus">MT1434</name>
</gene>
<proteinExistence type="inferred from homology"/>
<keyword id="KW-0067">ATP-binding</keyword>
<keyword id="KW-0963">Cytoplasm</keyword>
<keyword id="KW-0418">Kinase</keyword>
<keyword id="KW-0547">Nucleotide-binding</keyword>
<keyword id="KW-1185">Reference proteome</keyword>
<keyword id="KW-0808">Transferase</keyword>
<dbReference type="EC" id="2.7.4.8"/>
<dbReference type="EMBL" id="AE000516">
    <property type="protein sequence ID" value="AAK45699.1"/>
    <property type="status" value="ALT_INIT"/>
    <property type="molecule type" value="Genomic_DNA"/>
</dbReference>
<dbReference type="PIR" id="C70899">
    <property type="entry name" value="C70899"/>
</dbReference>
<dbReference type="RefSeq" id="WP_003900331.1">
    <property type="nucleotide sequence ID" value="NZ_KK341227.1"/>
</dbReference>
<dbReference type="SMR" id="P9WKE8"/>
<dbReference type="GeneID" id="45425367"/>
<dbReference type="KEGG" id="mtc:MT1434"/>
<dbReference type="PATRIC" id="fig|83331.31.peg.1540"/>
<dbReference type="HOGENOM" id="CLU_001715_1_1_11"/>
<dbReference type="Proteomes" id="UP000001020">
    <property type="component" value="Chromosome"/>
</dbReference>
<dbReference type="GO" id="GO:0005829">
    <property type="term" value="C:cytosol"/>
    <property type="evidence" value="ECO:0007669"/>
    <property type="project" value="TreeGrafter"/>
</dbReference>
<dbReference type="GO" id="GO:0005524">
    <property type="term" value="F:ATP binding"/>
    <property type="evidence" value="ECO:0007669"/>
    <property type="project" value="UniProtKB-UniRule"/>
</dbReference>
<dbReference type="GO" id="GO:0004385">
    <property type="term" value="F:guanylate kinase activity"/>
    <property type="evidence" value="ECO:0007669"/>
    <property type="project" value="UniProtKB-UniRule"/>
</dbReference>
<dbReference type="CDD" id="cd00071">
    <property type="entry name" value="GMPK"/>
    <property type="match status" value="1"/>
</dbReference>
<dbReference type="FunFam" id="3.30.63.10:FF:000002">
    <property type="entry name" value="Guanylate kinase 1"/>
    <property type="match status" value="1"/>
</dbReference>
<dbReference type="Gene3D" id="3.30.63.10">
    <property type="entry name" value="Guanylate Kinase phosphate binding domain"/>
    <property type="match status" value="1"/>
</dbReference>
<dbReference type="Gene3D" id="3.40.50.300">
    <property type="entry name" value="P-loop containing nucleotide triphosphate hydrolases"/>
    <property type="match status" value="1"/>
</dbReference>
<dbReference type="HAMAP" id="MF_00328">
    <property type="entry name" value="Guanylate_kinase"/>
    <property type="match status" value="1"/>
</dbReference>
<dbReference type="InterPro" id="IPR008145">
    <property type="entry name" value="GK/Ca_channel_bsu"/>
</dbReference>
<dbReference type="InterPro" id="IPR008144">
    <property type="entry name" value="Guanylate_kin-like_dom"/>
</dbReference>
<dbReference type="InterPro" id="IPR017665">
    <property type="entry name" value="Guanylate_kinase"/>
</dbReference>
<dbReference type="InterPro" id="IPR020590">
    <property type="entry name" value="Guanylate_kinase_CS"/>
</dbReference>
<dbReference type="InterPro" id="IPR027417">
    <property type="entry name" value="P-loop_NTPase"/>
</dbReference>
<dbReference type="NCBIfam" id="TIGR03263">
    <property type="entry name" value="guanyl_kin"/>
    <property type="match status" value="1"/>
</dbReference>
<dbReference type="PANTHER" id="PTHR23117:SF13">
    <property type="entry name" value="GUANYLATE KINASE"/>
    <property type="match status" value="1"/>
</dbReference>
<dbReference type="PANTHER" id="PTHR23117">
    <property type="entry name" value="GUANYLATE KINASE-RELATED"/>
    <property type="match status" value="1"/>
</dbReference>
<dbReference type="Pfam" id="PF00625">
    <property type="entry name" value="Guanylate_kin"/>
    <property type="match status" value="1"/>
</dbReference>
<dbReference type="SMART" id="SM00072">
    <property type="entry name" value="GuKc"/>
    <property type="match status" value="1"/>
</dbReference>
<dbReference type="SUPFAM" id="SSF52540">
    <property type="entry name" value="P-loop containing nucleoside triphosphate hydrolases"/>
    <property type="match status" value="1"/>
</dbReference>
<dbReference type="PROSITE" id="PS00856">
    <property type="entry name" value="GUANYLATE_KINASE_1"/>
    <property type="match status" value="1"/>
</dbReference>
<dbReference type="PROSITE" id="PS50052">
    <property type="entry name" value="GUANYLATE_KINASE_2"/>
    <property type="match status" value="1"/>
</dbReference>
<sequence>MSVGEGPDTKPTARGQPAAVGRVVVLSGPSAVGKSTVVRCLRERIPNLHFSVSATTRAPRPGEVDGVDYHFIDPTRFQQLIDQGELLEWAEIHGGLHRSGTLAQPVRAAAATGVPVLIEVDLAGARAIKKTMPEAVTVFLAPPSWQDLQARLIGRGTETADVIQRRLDTARIELAAQGDFDKVVVNRRLESACAELVSLLVGTAPGSP</sequence>
<feature type="chain" id="PRO_0000427666" description="Guanylate kinase">
    <location>
        <begin position="1"/>
        <end position="208"/>
    </location>
</feature>
<feature type="domain" description="Guanylate kinase-like">
    <location>
        <begin position="21"/>
        <end position="201"/>
    </location>
</feature>
<feature type="binding site" evidence="1">
    <location>
        <begin position="28"/>
        <end position="35"/>
    </location>
    <ligand>
        <name>ATP</name>
        <dbReference type="ChEBI" id="CHEBI:30616"/>
    </ligand>
</feature>
<reference key="1">
    <citation type="journal article" date="2002" name="J. Bacteriol.">
        <title>Whole-genome comparison of Mycobacterium tuberculosis clinical and laboratory strains.</title>
        <authorList>
            <person name="Fleischmann R.D."/>
            <person name="Alland D."/>
            <person name="Eisen J.A."/>
            <person name="Carpenter L."/>
            <person name="White O."/>
            <person name="Peterson J.D."/>
            <person name="DeBoy R.T."/>
            <person name="Dodson R.J."/>
            <person name="Gwinn M.L."/>
            <person name="Haft D.H."/>
            <person name="Hickey E.K."/>
            <person name="Kolonay J.F."/>
            <person name="Nelson W.C."/>
            <person name="Umayam L.A."/>
            <person name="Ermolaeva M.D."/>
            <person name="Salzberg S.L."/>
            <person name="Delcher A."/>
            <person name="Utterback T.R."/>
            <person name="Weidman J.F."/>
            <person name="Khouri H.M."/>
            <person name="Gill J."/>
            <person name="Mikula A."/>
            <person name="Bishai W."/>
            <person name="Jacobs W.R. Jr."/>
            <person name="Venter J.C."/>
            <person name="Fraser C.M."/>
        </authorList>
    </citation>
    <scope>NUCLEOTIDE SEQUENCE [LARGE SCALE GENOMIC DNA]</scope>
    <source>
        <strain>CDC 1551 / Oshkosh</strain>
    </source>
</reference>
<accession>P9WKE8</accession>
<accession>L0T9H5</accession>
<accession>P0A5I4</accession>
<accession>P71659</accession>
<comment type="function">
    <text evidence="1">Essential for recycling GMP and indirectly, cGMP.</text>
</comment>
<comment type="catalytic activity">
    <reaction>
        <text>GMP + ATP = GDP + ADP</text>
        <dbReference type="Rhea" id="RHEA:20780"/>
        <dbReference type="ChEBI" id="CHEBI:30616"/>
        <dbReference type="ChEBI" id="CHEBI:58115"/>
        <dbReference type="ChEBI" id="CHEBI:58189"/>
        <dbReference type="ChEBI" id="CHEBI:456216"/>
        <dbReference type="EC" id="2.7.4.8"/>
    </reaction>
</comment>
<comment type="subcellular location">
    <subcellularLocation>
        <location evidence="1">Cytoplasm</location>
    </subcellularLocation>
</comment>
<comment type="similarity">
    <text evidence="2">Belongs to the guanylate kinase family.</text>
</comment>
<comment type="sequence caution" evidence="2">
    <conflict type="erroneous initiation">
        <sequence resource="EMBL-CDS" id="AAK45699"/>
    </conflict>
</comment>